<proteinExistence type="inferred from homology"/>
<accession>A0A8B6XWY5</accession>
<organism>
    <name type="scientific">Hydra vulgaris</name>
    <name type="common">Hydra</name>
    <name type="synonym">Hydra attenuata</name>
    <dbReference type="NCBI Taxonomy" id="6087"/>
    <lineage>
        <taxon>Eukaryota</taxon>
        <taxon>Metazoa</taxon>
        <taxon>Cnidaria</taxon>
        <taxon>Hydrozoa</taxon>
        <taxon>Hydroidolina</taxon>
        <taxon>Anthoathecata</taxon>
        <taxon>Aplanulata</taxon>
        <taxon>Hydridae</taxon>
        <taxon>Hydra</taxon>
    </lineage>
</organism>
<evidence type="ECO:0000250" key="1">
    <source>
        <dbReference type="UniProtKB" id="A0A8B7DWS6"/>
    </source>
</evidence>
<evidence type="ECO:0000250" key="2">
    <source>
        <dbReference type="UniProtKB" id="B9W5G6"/>
    </source>
</evidence>
<evidence type="ECO:0000250" key="3">
    <source>
        <dbReference type="UniProtKB" id="P07845"/>
    </source>
</evidence>
<evidence type="ECO:0000250" key="4">
    <source>
        <dbReference type="UniProtKB" id="P61914"/>
    </source>
</evidence>
<evidence type="ECO:0000255" key="5"/>
<evidence type="ECO:0000303" key="6">
    <source>
    </source>
</evidence>
<evidence type="ECO:0000305" key="7"/>
<feature type="signal peptide" evidence="5">
    <location>
        <begin position="1"/>
        <end position="20"/>
    </location>
</feature>
<feature type="chain" id="PRO_5034131475" description="Hydra actinoporin-like toxin 5">
    <location>
        <begin position="21"/>
        <end position="186"/>
    </location>
</feature>
<feature type="short sequence motif" description="Cell attachment site" evidence="3">
    <location>
        <begin position="158"/>
        <end position="160"/>
    </location>
</feature>
<name>ACTL5_HYDVU</name>
<sequence>MLLYVCLVNLLLQSPSGVDSQVALGVIAKVGVNVAMKLISNIWKGDVVRGWKCAVENKSTKTLYALGTTPVSGHLATVLPDIPPQSTGMFVWSKSRGAARGAIGVVHYQYGNKVLNIMASIPYDWNLYGAWANARVTYQREPFSNLYYGRKGTKYPTRDGNWGKVDGTKFFLTEKSHAKFKVIFSG</sequence>
<comment type="function">
    <text evidence="1 2">Pore-forming protein that forms hydrophilic pores and causes cytolysis. Compared to equinatoxin-2 (AC P61914), it reveals lower cytolysis activity (5-12-fold difference, tested on erythrocytes), a larger pore size (probably 2-3 nm) and different affinity to membrane lipids (100-fold lower affinity to sphingomyelin). Binds to sulfatides (SFT) as well as to the two sphingolipids, lysophosphatidic acid (LPA) and sphingosine-1-phosphate (S1P). It seems to bind more strongly to LPA than to S1P and SFT. Shows cytolytic activity on HeLa cells, with a different potency than its paralogs (from most potent to less potent: HALT-4&gt;HALT-6~HALT-1&gt;HALT-3&gt;HALT-7&gt;HALT-2) (By similarity). Pore formation is a multi-step process that involves specific recognition of membrane lipid by a protein aromatic residues rich region, firm binding to the membrane (mainly driven by hydrophobic interactions) accompanied by the transfer of the N-terminal region to the lipid-water interface and finally pore formation after oligomerization of monomers (By similarity). In vitro, binds to the folate receptor alpha (FOLR1), a GPI-anchored membrane protein that plays a major role in the uptake of folate/folic acid into cells via endocytosis, suggesting a possible involvement of this receptor in the mechanism of HALT-1-induced cell lysis (By similarity). In vivo, does not cause visible paralysis in larvae of the blowfly Sarcophaga faculata, the most common arthropod prey of Hydra (By similarity).</text>
</comment>
<comment type="subunit">
    <text evidence="1 2">Octamer or nonamer in membranes (By similarity). Monomer in the soluble state (By similarity). In vitro, interacts with folate receptor alpha (of target organism) (By similarity).</text>
</comment>
<comment type="subcellular location">
    <subcellularLocation>
        <location evidence="2">Nematocyst</location>
    </subcellularLocation>
    <subcellularLocation>
        <location evidence="2">Secreted</location>
    </subcellularLocation>
    <subcellularLocation>
        <location evidence="2">Target cell membrane</location>
    </subcellularLocation>
    <text evidence="2">Forms an alpha-helical membrane channel in the prey.</text>
</comment>
<comment type="domain">
    <text evidence="4">Composed of a long N-terminal alpha-helix and a core region rich in beta-sheet structures. Before the pore formation, the alpha-helix binds the lipid membrane, partitions into the lipid-water interface and stabilizes the monomeric molecule on the membrane. Finally, it traverses the bilayer, thus forming the transmembrane pore.</text>
</comment>
<comment type="similarity">
    <text evidence="7">Belongs to the actinoporin family. HALT subfamily.</text>
</comment>
<dbReference type="RefSeq" id="XP_004206446.1">
    <property type="nucleotide sequence ID" value="XM_004206398.1"/>
</dbReference>
<dbReference type="SMR" id="A0A8B6XWY5"/>
<dbReference type="KEGG" id="hmg:101239490"/>
<dbReference type="OrthoDB" id="2304600at2759"/>
<dbReference type="Proteomes" id="UP000694840">
    <property type="component" value="Unplaced"/>
</dbReference>
<dbReference type="GO" id="GO:0005576">
    <property type="term" value="C:extracellular region"/>
    <property type="evidence" value="ECO:0007669"/>
    <property type="project" value="UniProtKB-SubCell"/>
</dbReference>
<dbReference type="GO" id="GO:0042151">
    <property type="term" value="C:nematocyst"/>
    <property type="evidence" value="ECO:0007669"/>
    <property type="project" value="UniProtKB-SubCell"/>
</dbReference>
<dbReference type="GO" id="GO:0044218">
    <property type="term" value="C:other organism cell membrane"/>
    <property type="evidence" value="ECO:0007669"/>
    <property type="project" value="UniProtKB-KW"/>
</dbReference>
<dbReference type="GO" id="GO:0046930">
    <property type="term" value="C:pore complex"/>
    <property type="evidence" value="ECO:0007669"/>
    <property type="project" value="InterPro"/>
</dbReference>
<dbReference type="GO" id="GO:0015267">
    <property type="term" value="F:channel activity"/>
    <property type="evidence" value="ECO:0007669"/>
    <property type="project" value="InterPro"/>
</dbReference>
<dbReference type="GO" id="GO:0090729">
    <property type="term" value="F:toxin activity"/>
    <property type="evidence" value="ECO:0007669"/>
    <property type="project" value="UniProtKB-KW"/>
</dbReference>
<dbReference type="GO" id="GO:0051715">
    <property type="term" value="P:cytolysis in another organism"/>
    <property type="evidence" value="ECO:0007669"/>
    <property type="project" value="InterPro"/>
</dbReference>
<dbReference type="GO" id="GO:0006812">
    <property type="term" value="P:monoatomic cation transport"/>
    <property type="evidence" value="ECO:0007669"/>
    <property type="project" value="InterPro"/>
</dbReference>
<dbReference type="GO" id="GO:0046931">
    <property type="term" value="P:pore complex assembly"/>
    <property type="evidence" value="ECO:0007669"/>
    <property type="project" value="InterPro"/>
</dbReference>
<dbReference type="Gene3D" id="2.60.270.20">
    <property type="entry name" value="Cytolysin/lectin"/>
    <property type="match status" value="1"/>
</dbReference>
<dbReference type="InterPro" id="IPR050677">
    <property type="entry name" value="Actinoporin_PFT"/>
</dbReference>
<dbReference type="InterPro" id="IPR009104">
    <property type="entry name" value="Anemon_actinoporin-like"/>
</dbReference>
<dbReference type="InterPro" id="IPR015926">
    <property type="entry name" value="Cytolysin/lectin"/>
</dbReference>
<dbReference type="PANTHER" id="PTHR40388">
    <property type="entry name" value="BRYOPORIN"/>
    <property type="match status" value="1"/>
</dbReference>
<dbReference type="PANTHER" id="PTHR40388:SF1">
    <property type="entry name" value="BRYOPORIN"/>
    <property type="match status" value="1"/>
</dbReference>
<dbReference type="Pfam" id="PF06369">
    <property type="entry name" value="Anemone_cytotox"/>
    <property type="match status" value="1"/>
</dbReference>
<dbReference type="SUPFAM" id="SSF63724">
    <property type="entry name" value="Cytolysin/lectin"/>
    <property type="match status" value="1"/>
</dbReference>
<protein>
    <recommendedName>
        <fullName evidence="6">Hydra actinoporin-like toxin 5</fullName>
        <shortName evidence="6">HALT-5</shortName>
    </recommendedName>
    <alternativeName>
        <fullName evidence="6">Alpha-pore-forming toxin</fullName>
        <shortName evidence="6">alpha-PFT</shortName>
    </alternativeName>
    <alternativeName>
        <fullName evidence="7">DELTA-hydritoxin-Hma1e</fullName>
        <shortName evidence="7">DELTA-HYTX-Hma1e</shortName>
    </alternativeName>
</protein>
<keyword id="KW-0204">Cytolysis</keyword>
<keyword id="KW-0354">Hemolysis</keyword>
<keyword id="KW-0472">Membrane</keyword>
<keyword id="KW-0166">Nematocyst</keyword>
<keyword id="KW-1185">Reference proteome</keyword>
<keyword id="KW-0964">Secreted</keyword>
<keyword id="KW-0732">Signal</keyword>
<keyword id="KW-1052">Target cell membrane</keyword>
<keyword id="KW-1053">Target membrane</keyword>
<keyword id="KW-0800">Toxin</keyword>
<keyword id="KW-0812">Transmembrane</keyword>
<reference key="1">
    <citation type="journal article" date="2014" name="Toxicon">
        <title>Hydra actinoporin-like toxin-1, an unusual hemolysin from the nematocyst venom of Hydra magnipapillata which belongs to an extended gene family.</title>
        <authorList>
            <person name="Glasser E."/>
            <person name="Rachamim T."/>
            <person name="Aharonovich D."/>
            <person name="Sher D."/>
        </authorList>
    </citation>
    <scope>NUCLEOTIDE SEQUENCE [GENOMIC DNA]</scope>
</reference>